<evidence type="ECO:0000250" key="1">
    <source>
        <dbReference type="UniProtKB" id="A1CLY8"/>
    </source>
</evidence>
<evidence type="ECO:0000250" key="2">
    <source>
        <dbReference type="UniProtKB" id="Q4WAZ9"/>
    </source>
</evidence>
<evidence type="ECO:0000255" key="3"/>
<evidence type="ECO:0000255" key="4">
    <source>
        <dbReference type="PROSITE-ProRule" id="PRU00258"/>
    </source>
</evidence>
<evidence type="ECO:0000255" key="5">
    <source>
        <dbReference type="PROSITE-ProRule" id="PRU01348"/>
    </source>
</evidence>
<evidence type="ECO:0000255" key="6">
    <source>
        <dbReference type="PROSITE-ProRule" id="PRU01363"/>
    </source>
</evidence>
<evidence type="ECO:0000256" key="7">
    <source>
        <dbReference type="SAM" id="MobiDB-lite"/>
    </source>
</evidence>
<evidence type="ECO:0000269" key="8">
    <source>
    </source>
</evidence>
<evidence type="ECO:0000303" key="9">
    <source>
    </source>
</evidence>
<evidence type="ECO:0000305" key="10"/>
<evidence type="ECO:0000305" key="11">
    <source>
    </source>
</evidence>
<dbReference type="EC" id="2.3.1.-" evidence="11"/>
<dbReference type="EC" id="6.3.2.-" evidence="11"/>
<dbReference type="EMBL" id="CH445325">
    <property type="protein sequence ID" value="EAT91803.2"/>
    <property type="molecule type" value="Genomic_DNA"/>
</dbReference>
<dbReference type="RefSeq" id="XP_001790998.1">
    <property type="nucleotide sequence ID" value="XM_001790946.1"/>
</dbReference>
<dbReference type="SMR" id="Q0V6Q6"/>
<dbReference type="STRING" id="321614.Q0V6Q6"/>
<dbReference type="EnsemblFungi" id="SNOT_00308">
    <property type="protein sequence ID" value="SNOT_00308"/>
    <property type="gene ID" value="SNOG_00308"/>
</dbReference>
<dbReference type="GeneID" id="5967890"/>
<dbReference type="KEGG" id="pno:SNOG_00308"/>
<dbReference type="VEuPathDB" id="FungiDB:JI435_003080"/>
<dbReference type="eggNOG" id="KOG1178">
    <property type="taxonomic scope" value="Eukaryota"/>
</dbReference>
<dbReference type="eggNOG" id="KOG1202">
    <property type="taxonomic scope" value="Eukaryota"/>
</dbReference>
<dbReference type="HOGENOM" id="CLU_000022_37_8_1"/>
<dbReference type="InParanoid" id="Q0V6Q6"/>
<dbReference type="Proteomes" id="UP000001055">
    <property type="component" value="Unassembled WGS sequence"/>
</dbReference>
<dbReference type="GO" id="GO:0004312">
    <property type="term" value="F:fatty acid synthase activity"/>
    <property type="evidence" value="ECO:0000318"/>
    <property type="project" value="GO_Central"/>
</dbReference>
<dbReference type="GO" id="GO:0016853">
    <property type="term" value="F:isomerase activity"/>
    <property type="evidence" value="ECO:0007669"/>
    <property type="project" value="UniProtKB-KW"/>
</dbReference>
<dbReference type="GO" id="GO:0016874">
    <property type="term" value="F:ligase activity"/>
    <property type="evidence" value="ECO:0007669"/>
    <property type="project" value="UniProtKB-KW"/>
</dbReference>
<dbReference type="GO" id="GO:0008168">
    <property type="term" value="F:methyltransferase activity"/>
    <property type="evidence" value="ECO:0007669"/>
    <property type="project" value="UniProtKB-KW"/>
</dbReference>
<dbReference type="GO" id="GO:0016491">
    <property type="term" value="F:oxidoreductase activity"/>
    <property type="evidence" value="ECO:0007669"/>
    <property type="project" value="UniProtKB-KW"/>
</dbReference>
<dbReference type="GO" id="GO:0031177">
    <property type="term" value="F:phosphopantetheine binding"/>
    <property type="evidence" value="ECO:0007669"/>
    <property type="project" value="InterPro"/>
</dbReference>
<dbReference type="GO" id="GO:0006633">
    <property type="term" value="P:fatty acid biosynthetic process"/>
    <property type="evidence" value="ECO:0000318"/>
    <property type="project" value="GO_Central"/>
</dbReference>
<dbReference type="GO" id="GO:0032259">
    <property type="term" value="P:methylation"/>
    <property type="evidence" value="ECO:0007669"/>
    <property type="project" value="UniProtKB-KW"/>
</dbReference>
<dbReference type="GO" id="GO:0044550">
    <property type="term" value="P:secondary metabolite biosynthetic process"/>
    <property type="evidence" value="ECO:0000318"/>
    <property type="project" value="GO_Central"/>
</dbReference>
<dbReference type="GO" id="GO:0009403">
    <property type="term" value="P:toxin biosynthetic process"/>
    <property type="evidence" value="ECO:0007669"/>
    <property type="project" value="UniProtKB-ARBA"/>
</dbReference>
<dbReference type="CDD" id="cd05930">
    <property type="entry name" value="A_NRPS"/>
    <property type="match status" value="1"/>
</dbReference>
<dbReference type="CDD" id="cd02440">
    <property type="entry name" value="AdoMet_MTases"/>
    <property type="match status" value="1"/>
</dbReference>
<dbReference type="CDD" id="cd19532">
    <property type="entry name" value="C_PKS-NRPS"/>
    <property type="match status" value="1"/>
</dbReference>
<dbReference type="CDD" id="cd00833">
    <property type="entry name" value="PKS"/>
    <property type="match status" value="1"/>
</dbReference>
<dbReference type="Gene3D" id="3.30.300.30">
    <property type="match status" value="1"/>
</dbReference>
<dbReference type="Gene3D" id="3.30.70.3290">
    <property type="match status" value="1"/>
</dbReference>
<dbReference type="Gene3D" id="3.40.47.10">
    <property type="match status" value="2"/>
</dbReference>
<dbReference type="Gene3D" id="1.10.1200.10">
    <property type="entry name" value="ACP-like"/>
    <property type="match status" value="1"/>
</dbReference>
<dbReference type="Gene3D" id="3.30.559.10">
    <property type="entry name" value="Chloramphenicol acetyltransferase-like domain"/>
    <property type="match status" value="1"/>
</dbReference>
<dbReference type="Gene3D" id="3.40.366.10">
    <property type="entry name" value="Malonyl-Coenzyme A Acyl Carrier Protein, domain 2"/>
    <property type="match status" value="1"/>
</dbReference>
<dbReference type="Gene3D" id="3.40.50.12780">
    <property type="entry name" value="N-terminal domain of ligase-like"/>
    <property type="match status" value="1"/>
</dbReference>
<dbReference type="Gene3D" id="3.40.50.720">
    <property type="entry name" value="NAD(P)-binding Rossmann-like Domain"/>
    <property type="match status" value="3"/>
</dbReference>
<dbReference type="Gene3D" id="3.30.559.30">
    <property type="entry name" value="Nonribosomal peptide synthetase, condensation domain"/>
    <property type="match status" value="1"/>
</dbReference>
<dbReference type="Gene3D" id="3.10.129.110">
    <property type="entry name" value="Polyketide synthase dehydratase"/>
    <property type="match status" value="1"/>
</dbReference>
<dbReference type="Gene3D" id="3.40.50.150">
    <property type="entry name" value="Vaccinia Virus protein VP39"/>
    <property type="match status" value="1"/>
</dbReference>
<dbReference type="InterPro" id="IPR001227">
    <property type="entry name" value="Ac_transferase_dom_sf"/>
</dbReference>
<dbReference type="InterPro" id="IPR036736">
    <property type="entry name" value="ACP-like_sf"/>
</dbReference>
<dbReference type="InterPro" id="IPR014043">
    <property type="entry name" value="Acyl_transferase_dom"/>
</dbReference>
<dbReference type="InterPro" id="IPR016035">
    <property type="entry name" value="Acyl_Trfase/lysoPLipase"/>
</dbReference>
<dbReference type="InterPro" id="IPR045851">
    <property type="entry name" value="AMP-bd_C_sf"/>
</dbReference>
<dbReference type="InterPro" id="IPR020845">
    <property type="entry name" value="AMP-binding_CS"/>
</dbReference>
<dbReference type="InterPro" id="IPR000873">
    <property type="entry name" value="AMP-dep_synth/lig_dom"/>
</dbReference>
<dbReference type="InterPro" id="IPR042099">
    <property type="entry name" value="ANL_N_sf"/>
</dbReference>
<dbReference type="InterPro" id="IPR023213">
    <property type="entry name" value="CAT-like_dom_sf"/>
</dbReference>
<dbReference type="InterPro" id="IPR001242">
    <property type="entry name" value="Condensatn"/>
</dbReference>
<dbReference type="InterPro" id="IPR013120">
    <property type="entry name" value="Far_NAD-bd"/>
</dbReference>
<dbReference type="InterPro" id="IPR014031">
    <property type="entry name" value="Ketoacyl_synth_C"/>
</dbReference>
<dbReference type="InterPro" id="IPR014030">
    <property type="entry name" value="Ketoacyl_synth_N"/>
</dbReference>
<dbReference type="InterPro" id="IPR016036">
    <property type="entry name" value="Malonyl_transacylase_ACP-bd"/>
</dbReference>
<dbReference type="InterPro" id="IPR013217">
    <property type="entry name" value="Methyltransf_12"/>
</dbReference>
<dbReference type="InterPro" id="IPR036291">
    <property type="entry name" value="NAD(P)-bd_dom_sf"/>
</dbReference>
<dbReference type="InterPro" id="IPR032821">
    <property type="entry name" value="PKS_assoc"/>
</dbReference>
<dbReference type="InterPro" id="IPR020841">
    <property type="entry name" value="PKS_Beta-ketoAc_synthase_dom"/>
</dbReference>
<dbReference type="InterPro" id="IPR042104">
    <property type="entry name" value="PKS_dehydratase_sf"/>
</dbReference>
<dbReference type="InterPro" id="IPR020807">
    <property type="entry name" value="PKS_DH"/>
</dbReference>
<dbReference type="InterPro" id="IPR049551">
    <property type="entry name" value="PKS_DH_C"/>
</dbReference>
<dbReference type="InterPro" id="IPR049552">
    <property type="entry name" value="PKS_DH_N"/>
</dbReference>
<dbReference type="InterPro" id="IPR013968">
    <property type="entry name" value="PKS_KR"/>
</dbReference>
<dbReference type="InterPro" id="IPR049900">
    <property type="entry name" value="PKS_mFAS_DH"/>
</dbReference>
<dbReference type="InterPro" id="IPR050091">
    <property type="entry name" value="PKS_NRPS_Biosynth_Enz"/>
</dbReference>
<dbReference type="InterPro" id="IPR020806">
    <property type="entry name" value="PKS_PP-bd"/>
</dbReference>
<dbReference type="InterPro" id="IPR009081">
    <property type="entry name" value="PP-bd_ACP"/>
</dbReference>
<dbReference type="InterPro" id="IPR006162">
    <property type="entry name" value="Ppantetheine_attach_site"/>
</dbReference>
<dbReference type="InterPro" id="IPR029063">
    <property type="entry name" value="SAM-dependent_MTases_sf"/>
</dbReference>
<dbReference type="InterPro" id="IPR016039">
    <property type="entry name" value="Thiolase-like"/>
</dbReference>
<dbReference type="PANTHER" id="PTHR43775">
    <property type="entry name" value="FATTY ACID SYNTHASE"/>
    <property type="match status" value="1"/>
</dbReference>
<dbReference type="PANTHER" id="PTHR43775:SF37">
    <property type="entry name" value="SI:DKEY-61P9.11"/>
    <property type="match status" value="1"/>
</dbReference>
<dbReference type="Pfam" id="PF23297">
    <property type="entry name" value="ACP_SdgA_C"/>
    <property type="match status" value="1"/>
</dbReference>
<dbReference type="Pfam" id="PF00698">
    <property type="entry name" value="Acyl_transf_1"/>
    <property type="match status" value="1"/>
</dbReference>
<dbReference type="Pfam" id="PF00501">
    <property type="entry name" value="AMP-binding"/>
    <property type="match status" value="1"/>
</dbReference>
<dbReference type="Pfam" id="PF00668">
    <property type="entry name" value="Condensation"/>
    <property type="match status" value="1"/>
</dbReference>
<dbReference type="Pfam" id="PF16197">
    <property type="entry name" value="KAsynt_C_assoc"/>
    <property type="match status" value="1"/>
</dbReference>
<dbReference type="Pfam" id="PF00109">
    <property type="entry name" value="ketoacyl-synt"/>
    <property type="match status" value="2"/>
</dbReference>
<dbReference type="Pfam" id="PF02801">
    <property type="entry name" value="Ketoacyl-synt_C"/>
    <property type="match status" value="1"/>
</dbReference>
<dbReference type="Pfam" id="PF08659">
    <property type="entry name" value="KR"/>
    <property type="match status" value="1"/>
</dbReference>
<dbReference type="Pfam" id="PF08242">
    <property type="entry name" value="Methyltransf_12"/>
    <property type="match status" value="1"/>
</dbReference>
<dbReference type="Pfam" id="PF07993">
    <property type="entry name" value="NAD_binding_4"/>
    <property type="match status" value="1"/>
</dbReference>
<dbReference type="Pfam" id="PF21089">
    <property type="entry name" value="PKS_DH_N"/>
    <property type="match status" value="1"/>
</dbReference>
<dbReference type="Pfam" id="PF00550">
    <property type="entry name" value="PP-binding"/>
    <property type="match status" value="1"/>
</dbReference>
<dbReference type="Pfam" id="PF14765">
    <property type="entry name" value="PS-DH"/>
    <property type="match status" value="1"/>
</dbReference>
<dbReference type="SMART" id="SM00827">
    <property type="entry name" value="PKS_AT"/>
    <property type="match status" value="1"/>
</dbReference>
<dbReference type="SMART" id="SM00826">
    <property type="entry name" value="PKS_DH"/>
    <property type="match status" value="1"/>
</dbReference>
<dbReference type="SMART" id="SM00822">
    <property type="entry name" value="PKS_KR"/>
    <property type="match status" value="1"/>
</dbReference>
<dbReference type="SMART" id="SM00825">
    <property type="entry name" value="PKS_KS"/>
    <property type="match status" value="1"/>
</dbReference>
<dbReference type="SMART" id="SM00823">
    <property type="entry name" value="PKS_PP"/>
    <property type="match status" value="2"/>
</dbReference>
<dbReference type="SUPFAM" id="SSF56801">
    <property type="entry name" value="Acetyl-CoA synthetase-like"/>
    <property type="match status" value="1"/>
</dbReference>
<dbReference type="SUPFAM" id="SSF47336">
    <property type="entry name" value="ACP-like"/>
    <property type="match status" value="2"/>
</dbReference>
<dbReference type="SUPFAM" id="SSF52777">
    <property type="entry name" value="CoA-dependent acyltransferases"/>
    <property type="match status" value="2"/>
</dbReference>
<dbReference type="SUPFAM" id="SSF52151">
    <property type="entry name" value="FabD/lysophospholipase-like"/>
    <property type="match status" value="1"/>
</dbReference>
<dbReference type="SUPFAM" id="SSF51735">
    <property type="entry name" value="NAD(P)-binding Rossmann-fold domains"/>
    <property type="match status" value="2"/>
</dbReference>
<dbReference type="SUPFAM" id="SSF55048">
    <property type="entry name" value="Probable ACP-binding domain of malonyl-CoA ACP transacylase"/>
    <property type="match status" value="1"/>
</dbReference>
<dbReference type="SUPFAM" id="SSF53335">
    <property type="entry name" value="S-adenosyl-L-methionine-dependent methyltransferases"/>
    <property type="match status" value="1"/>
</dbReference>
<dbReference type="SUPFAM" id="SSF53901">
    <property type="entry name" value="Thiolase-like"/>
    <property type="match status" value="1"/>
</dbReference>
<dbReference type="PROSITE" id="PS00061">
    <property type="entry name" value="ADH_SHORT"/>
    <property type="match status" value="1"/>
</dbReference>
<dbReference type="PROSITE" id="PS00455">
    <property type="entry name" value="AMP_BINDING"/>
    <property type="match status" value="1"/>
</dbReference>
<dbReference type="PROSITE" id="PS50075">
    <property type="entry name" value="CARRIER"/>
    <property type="match status" value="2"/>
</dbReference>
<dbReference type="PROSITE" id="PS52004">
    <property type="entry name" value="KS3_2"/>
    <property type="match status" value="1"/>
</dbReference>
<dbReference type="PROSITE" id="PS00012">
    <property type="entry name" value="PHOSPHOPANTETHEINE"/>
    <property type="match status" value="1"/>
</dbReference>
<dbReference type="PROSITE" id="PS52019">
    <property type="entry name" value="PKS_MFAS_DH"/>
    <property type="match status" value="1"/>
</dbReference>
<proteinExistence type="evidence at protein level"/>
<sequence>MGSSSKDYTNEPIAIVGSACRFPGGASEPSKLWDLLEHPTDVLKEIPESRFSVDGFYHPNGLHHGTTNVRHSYILDDDIRLFDAQFFGIKPIEANSIDPQQRLLMETVYEGLEAAGQSIQRLQGSQTAVYVGLMSSDYKDLLGNDQESYPTLVALHQAVQLLRSGDGTNVALAAGTNLLLNPDQYIAESKLKMLSPDGRSRMWDEKANGYARGDGIAVVVLKRLSQALEDGDHIECLIRETQINQDGKTKGITMPSATAQTALIRATYAKAGLDLSKPSDRPQYFEAHGTGTPAGDPIEAEAIHTAFFGGDLGEAGHDKLFVGSIKTVIGHTEGTAGLAAVLKASLALQNRAVPPNRLFDRLNSKIRPFYGDLEILTKAQEWPVLVPGSVARASVNSFGFGGANAHAILEAYEPPSLVSDDVLVTPLAPVQFSAASETALRGTLRKYAEFLEKNQDVNLRDLAWTLNTRRSVLAARTAVFGANALDLAHELQKRAEADVATLIPVASRSLPAKPRILGVFTGQGAQWARMGAELLDASPAVDRIISELEKSLSTLPDGPEWSVKGEILATGGASRVAEAAISQPLCTAVQIVLVDLLKSAGINFEAVVGHSSGEMGAAYAAGYLSAQDAIRVAYYRGRHLHLAGGLGGEQGGMMAVGTSFEDAEELCSLPEFQGRIGVAAINSGASVTLSGDLDTIEAAKEILDDEKKFARLLKVDKAYHSHHMIACSDAYRKSLADCSIKVLRPSRGSATWLSSVYGEDIVDYRKELTSEYWINNMVRPVLFSQAVEFAAAEKGPFDCAIEVGPHPALKGPALQVLQEFLGNSIPYTGLLSRDRDDKKAFAEGLGYLWQAFGENAIDHKSFDTFVAGASAPLPQITSNLPTYAWDHDRRFWHESRQYAANRTKPDPTHELLGTKCPDGTEQQCRWRNMLRPQEIPWLAGHQIQGQMVFPAAGYVSAAVEAVKFSNEGLPITTIEIEDFVIGQAIIFNDDYASVETQFTLTNIVSDHMSWSASFAFYSASQKHSLGMDLNASGRISALFGPPKDDVLPPSTGRELNMIDVDPEQFYNSLSKLGFGYTGAFKALRNLYRKMDVAMGEIQNPRSTDPAYNLLLHPATFDNAIQSIILAYCYPGDGRLWSVHLPTSIKKIRINPSLCENSAGQEAVLHFKSTITSGRSTEIQGDVELYDTNGVNSIMQLEGLHTKPLGHATPENDRTLFLETIWDTAEPTKELALLAQPDISKKAQLGLDIERVAFYYIRNLGHVTTKADREQAEDYHKHFFNYIDHTVVSVNNGTSLFAKKEWMHDTHEQVLDIIKSYPESIDMKLMYAVGEHLLPVIRHETTMLEYMREDDMLNDFYVKALGFDEYTETMADQVCQLAHRYPHMNVLEIGAGTGGATKRIFKKLGKRFSSYTYTDISTGFFEKAREVFSEVESKMTFKALNIEKDPIAQGYTEGSYDLIVASLVLHATHVMEDTMRNVRRLLKPGGYLIMLELGDYVDMRTGLMFGPLPGWWMGYDDGRKLSPTMSEDDWDKCMKKVGFSGVDAIVPRQEHVPISLAIMTAQAVDEHVEFIRNPFASDGMFLLGHHLTLIGGSTDKTAKLLEAALPYLRSFYKHVTTVKSLASLSTIELPFMGSVICLEDLDVAVFENLSTETLQGVQHLFTKSKSCLWVTQGRKDDNPYQNMTVGLGRVATLEMTHLRLQSLDFDVIDSSTAVIMAKSLLRFEATEAWEQQGLAKNLLWSVEPEMSYEKGSFRVPRLIPNHARNNRYNSSRRLITQNKDPRTSTIGLRWTSKGYEIHNESPASSGLAFDGRVELQVSHSSLEAIRITKADYAYLVLGTNLRTKEQAFAITPDRHSIVRVFDSWTVPYTMTTEEALRLLPLVQDHLMALATMSDFSSGEALILIEPRWRFARLLSNLAQEKGVKLILLTTRLDIKDQDWITLHPNAPRRIIQSHMPKTASRLISCTDDLEFEANVKACLPPNCKMQRTEIFSSRVSKLDSFSSMAFIPSSLRSAFVRAHHESSPGDKESIASVSDIVSRGKPAKATFFSWDSSPTIPVQITPVDLEPLFSSDKTYWLVGLTGGLGLSLCEWMIQRGAKYVVLTSRNPQVDAKWEAHMKAHDAVVRIYANDVTDRDSVRSVYKQIRDELPPIGGVAQGAMVLSDAMFVDMGLERVCKVVEPKVKGAIHLEELFSEADLEFFVFFSSMAYVTGNQGQSIYAAANAYMAALAAQRKKRGLAGSVINIGAIVGNGYVTRQLTDEQRDYLAHMGNVFMSEQDFHQIFAEGVVAGRPGNDDIPEIMTGLGLAHMDDSDKVTWFNNPKFSHCVLWPDDQGAAVGMSKQNVTVKSRLLLATTADEVNEAIQESFTMKLRSSLQIEDSVAILKMNAEELGLDSLVAVDLRSWFVKELNVEMPVLKILGGFTVAELVSAAQEQLPASLTPNFGKEIDPALKAAAMLEKAAKTETVPRITNEANTAAYREEVDEEEQEEDEADNRPNFFSSASKDATQSSERFAIDASHISKSREVAFKATLLAPPATRSKTSSSSSSFTSDPENDFMMKSQMSAATPLSSYNDEYITAEDIKFERVSPMSFGQARFWFLKFYLQDQTTFNITTSIRLSGRLNVETFANAVQAVGRRHEGLRTAFFTDRHNQPMQGILHQSVLHLEHLRVSSQEAIDIEYAKTKNHVYNIGGGETMKIILLSLADDLYQIIIGYHHINMDGMSLEVILSDLQKVYNQQQLARVVPQYLDFSESQRREHSTGKWGKEISFWKGEFADIPAPLPILPMSKKSNRSPLTKYASNTVKFKIDAATSAQIQIACKRAKASPFNFYLAAFKTLLYRTAGEEQNDICIGIADGGRNSEHVEESVGFFLNILPLRFKQDSAQTFLEALRDARSKVVAALANSRVPFDVILNEVNAPRAATHNPLFQAFINYRQGVQERRQFCGCDSEATQFDGSQTAYDISIDILANPGADSTVYISGQSDLYSEENVKLLAHSYLALIKSFAKNPASRLGRPPLYDPQDTHRALDVGVGPELTDTWPNTLVDRVDEMASRFGSQIALKGPRNQLTYSQMTDRIHSIASSLKSNKIGNCSRVGVLQDPSTDFFCSLLAILRIGAIFVPLELRLTSPRLAVIVEDSNIDAIIYDKANQKDLLTLGSGFQKVNVSLIPAKSTSTVVNEAQPGSPAVILYTSGSTGKPKGILLSHASWRNQIQSSTQAFRIPQGTGVHLQQSSWSFDIAISQTFVALANGASLLIVSKELRGDSIAMARMIVSDRITHVQATPSEMVSWLHDADANALRSSSWKFAMSGGEKMNSALIGEFKALGKSDLALVNAYGPAETTLAVGSAEIDILDPGALDTAFRLFPNYSVYILDSKKQPVPLGISGEVYIGGAGVATGYLNNDNLTKERFLPDDFAPERYLQNDWTIMHRSGDRGRLTADGLVLEGRVDGDTQIKLRGIRIDLQDIESTIVQHSKGAVRDAVVSLRKSGETQILAAHIVLSAAFSGNAKTILDSIQTSLPLPQYMRPATTLVVKTLPTNYSGKLDRKAVSELPLRPVSKTSVPVTKENKSPESELRTIWKQVLGDDITSSHEIDYETDFFHVGGNSLALVRVQGMLKAAFNVEPPVAQLFDNSTLGAMLNLISPASQTMSTEHSSLLPNVVEYSPQAAASSGTIDWEKETALTDDLYDAEINPTPRDQGLAFKTVAITGASGFLGKEILKRMVDDVHIDKIHAIAIRRHISDLPAIFSNAKVQVHRGDLNAPRLGLSETRAKEIFDETDTVIHNGADVSFLKTYKTLSKTNVGSTRELVKLCLPSRIPIHFISSASVAHLSGRASFGEESVSEYEPPQDGSDGYTATKWASERFLELVSEKFSIPVWIHRPSSITGAEAPALDLMTNLLQFSKTMSKVPYSPTWSGTLDFVSVESVAHDIVEEVKNDSAHSSGMVRFMYESGDLEIAVQDMQGSLAKQTGEEFDKVDVETWTREAVSEGLDELVAAYLSTAANLPIMFPRLIRDNKRRRIEQKVQEQPSRGSSLREVVGRWLWSRQ</sequence>
<organism>
    <name type="scientific">Phaeosphaeria nodorum (strain SN15 / ATCC MYA-4574 / FGSC 10173)</name>
    <name type="common">Glume blotch fungus</name>
    <name type="synonym">Parastagonospora nodorum</name>
    <dbReference type="NCBI Taxonomy" id="321614"/>
    <lineage>
        <taxon>Eukaryota</taxon>
        <taxon>Fungi</taxon>
        <taxon>Dikarya</taxon>
        <taxon>Ascomycota</taxon>
        <taxon>Pezizomycotina</taxon>
        <taxon>Dothideomycetes</taxon>
        <taxon>Pleosporomycetidae</taxon>
        <taxon>Pleosporales</taxon>
        <taxon>Pleosporineae</taxon>
        <taxon>Phaeosphaeriaceae</taxon>
        <taxon>Parastagonospora</taxon>
    </lineage>
</organism>
<comment type="function">
    <text evidence="8 11">Hybrid PKS-NRPS synthetase; part of the gene cluster that mediates the biosynthesis of the mycotoxins phomacins, leucine-derived cytochalasans with potent actin polymerization-inhibitory activities and monocot-specific antigerminative activities (PubMed:31815421). The first step in the pathway is catalyzed by the hybrid PKS-NRPS phmA, assisted by the enoyl reductase phmE, that are responsible for fusion of the leucine precursor and the polyketide backbone to produce a 2-pyrrolidone intermediate (PubMed:31815421). The polyketide synthase module (PKS) of phmA is responsible for the synthesis of the polyketide backbone and the downstream nonribosomal peptide synthetase (NRPS) amidates the carboxyl end of the polyketide with the leucine precursor (PubMed:31815421). Because phmA lacks a designated enoylreductase (ER) domain, the required activity is provided the enoyl reductase phmE (PubMed:31815421). Reduction by the hydrolyase phmG, followed by dehydration and intra-molecular Diels-Alder cyclization by the Diels-Alderase phmD then yield the required isoindolone-fused macrocycle (Probable). A number of oxidative steps catalyzed by the tailoring cytochrome P450 monooxygenase phmB, the FAD-linked oxidoreductase phmC and the short-chain dehydrogenase/reductase phmF, are further required to afford the final products, phomacin D and phomacin E (PubMed:31815421).</text>
</comment>
<comment type="pathway">
    <text evidence="8">Mycotoxin biosynthesis.</text>
</comment>
<comment type="induction">
    <text evidence="8">Expression increases over time in planta on wheat (Avena sativum) and peaks at 10 days post inoculation when the plant tissue is heavily necrotic and P.nodorum is undergoing asexual sporulation.</text>
</comment>
<comment type="domain">
    <text evidence="2 11">NRP synthetases are composed of discrete domains (adenylation (A), thiolation (T) or peptidyl carrier protein (PCP) and condensation (C) domains) which when grouped together are referred to as a single module. Each module is responsible for the recognition (via the A domain) and incorporation of a single amino acid into the growing peptide product. Thus, an NRP synthetase is generally composed of one or more modules and can terminate in a thioesterase domain (TE) that releases the newly synthesized peptide from the enzyme. Occasionally, epimerase (E) domains (responsible for L- to D- amino acid conversion) are present within the NRP synthetase. CcsA also contains a polyketide synthase module (PKS) consisting of several catalytic domains including a ketoacyl synthase domain (KS), an acyl transferase domain (AT), a dehydratase domain (DH), a methyltransferase domain (MT), and a ketoreductase domain (KR). Instead of a thioesterase domain (TE), phmA finishes with a reductase-like domain (R) for peptide release. PhmA has the following architecture: KS-AT-DH-MT-KR-PCP-C-A-T-R.</text>
</comment>
<comment type="disruption phenotype">
    <text evidence="8">Leads to significant reduced virulence in wheat seedling infection assays.</text>
</comment>
<comment type="similarity">
    <text evidence="10">Belongs to the NRP synthetase family.</text>
</comment>
<accession>Q0V6Q6</accession>
<keyword id="KW-0012">Acyltransferase</keyword>
<keyword id="KW-0413">Isomerase</keyword>
<keyword id="KW-0436">Ligase</keyword>
<keyword id="KW-0489">Methyltransferase</keyword>
<keyword id="KW-0511">Multifunctional enzyme</keyword>
<keyword id="KW-0521">NADP</keyword>
<keyword id="KW-0560">Oxidoreductase</keyword>
<keyword id="KW-0596">Phosphopantetheine</keyword>
<keyword id="KW-0597">Phosphoprotein</keyword>
<keyword id="KW-0677">Repeat</keyword>
<keyword id="KW-0949">S-adenosyl-L-methionine</keyword>
<keyword id="KW-0808">Transferase</keyword>
<keyword id="KW-0843">Virulence</keyword>
<reference key="1">
    <citation type="journal article" date="2007" name="Plant Cell">
        <title>Dothideomycete-plant interactions illuminated by genome sequencing and EST analysis of the wheat pathogen Stagonospora nodorum.</title>
        <authorList>
            <person name="Hane J.K."/>
            <person name="Lowe R.G.T."/>
            <person name="Solomon P.S."/>
            <person name="Tan K.-C."/>
            <person name="Schoch C.L."/>
            <person name="Spatafora J.W."/>
            <person name="Crous P.W."/>
            <person name="Kodira C.D."/>
            <person name="Birren B.W."/>
            <person name="Galagan J.E."/>
            <person name="Torriani S.F.F."/>
            <person name="McDonald B.A."/>
            <person name="Oliver R.P."/>
        </authorList>
    </citation>
    <scope>NUCLEOTIDE SEQUENCE [LARGE SCALE GENOMIC DNA]</scope>
    <source>
        <strain>SN15 / ATCC MYA-4574 / FGSC 10173</strain>
    </source>
</reference>
<reference key="2">
    <citation type="journal article" date="2020" name="ACS Chem. Biol.">
        <title>Genomics-driven discovery of phytotoxic cytochalasans involved in the virulence of the wheat pathogen Parastagonospora nodorum.</title>
        <authorList>
            <person name="Li H."/>
            <person name="Wei H."/>
            <person name="Hu J."/>
            <person name="Lacey E."/>
            <person name="Sobolev A.N."/>
            <person name="Stubbs K.A."/>
            <person name="Solomon P.S."/>
            <person name="Chooi Y.H."/>
        </authorList>
    </citation>
    <scope>FUNCTION</scope>
    <scope>INDUCTION</scope>
    <scope>DOMAIN</scope>
    <scope>CATALYTIC ACTIVITY</scope>
    <scope>DISRUPTION PHENOTYPE</scope>
    <scope>PATHWAY</scope>
</reference>
<protein>
    <recommendedName>
        <fullName evidence="9">Polyketide synthase-nonribosomal peptide synthetase phmA</fullName>
        <shortName evidence="9">PKS-NRPS phmA</shortName>
        <ecNumber evidence="11">2.3.1.-</ecNumber>
        <ecNumber evidence="11">6.3.2.-</ecNumber>
    </recommendedName>
    <alternativeName>
        <fullName evidence="9">Phomacin biosynthesis cluster protein A</fullName>
    </alternativeName>
</protein>
<feature type="chain" id="PRO_0000449441" description="Polyketide synthase-nonribosomal peptide synthetase phmA">
    <location>
        <begin position="1"/>
        <end position="4042"/>
    </location>
</feature>
<feature type="domain" description="Ketosynthase family 3 (KS3)" evidence="5">
    <location>
        <begin position="10"/>
        <end position="411"/>
    </location>
</feature>
<feature type="domain" description="PKS/mFAS DH" evidence="6">
    <location>
        <begin position="909"/>
        <end position="1210"/>
    </location>
</feature>
<feature type="domain" description="Carrier 1" evidence="4">
    <location>
        <begin position="2351"/>
        <end position="2433"/>
    </location>
</feature>
<feature type="domain" description="Carrier 2" evidence="4">
    <location>
        <begin position="3562"/>
        <end position="3642"/>
    </location>
</feature>
<feature type="region of interest" description="Acyl transferase" evidence="1 3">
    <location>
        <begin position="519"/>
        <end position="837"/>
    </location>
</feature>
<feature type="region of interest" description="Dehydratase (DH) domain" evidence="1 3">
    <location>
        <begin position="909"/>
        <end position="1208"/>
    </location>
</feature>
<feature type="region of interest" description="N-terminal hotdog fold" evidence="6">
    <location>
        <begin position="909"/>
        <end position="1042"/>
    </location>
</feature>
<feature type="region of interest" description="C-terminal hotdog fold" evidence="6">
    <location>
        <begin position="1057"/>
        <end position="1210"/>
    </location>
</feature>
<feature type="region of interest" description="Methyltransferase (MT) domain" evidence="1 3">
    <location>
        <begin position="1349"/>
        <end position="1572"/>
    </location>
</feature>
<feature type="region of interest" description="Ketoreductase (KR)domain" evidence="1 3">
    <location>
        <begin position="2073"/>
        <end position="2246"/>
    </location>
</feature>
<feature type="region of interest" description="Disordered" evidence="7">
    <location>
        <begin position="2460"/>
        <end position="2504"/>
    </location>
</feature>
<feature type="region of interest" description="Disordered" evidence="7">
    <location>
        <begin position="2535"/>
        <end position="2554"/>
    </location>
</feature>
<feature type="region of interest" description="Condensation" evidence="1 3">
    <location>
        <begin position="2584"/>
        <end position="3019"/>
    </location>
</feature>
<feature type="region of interest" description="Adenylation" evidence="1 3">
    <location>
        <begin position="3047"/>
        <end position="3443"/>
    </location>
</feature>
<feature type="region of interest" description="Reductase-like" evidence="1 3">
    <location>
        <begin position="3703"/>
        <end position="3924"/>
    </location>
</feature>
<feature type="compositionally biased region" description="Acidic residues" evidence="7">
    <location>
        <begin position="2479"/>
        <end position="2490"/>
    </location>
</feature>
<feature type="compositionally biased region" description="Polar residues" evidence="7">
    <location>
        <begin position="2495"/>
        <end position="2504"/>
    </location>
</feature>
<feature type="compositionally biased region" description="Low complexity" evidence="7">
    <location>
        <begin position="2536"/>
        <end position="2549"/>
    </location>
</feature>
<feature type="active site" description="Proton acceptor; for dehydratase activity" evidence="6">
    <location>
        <position position="941"/>
    </location>
</feature>
<feature type="active site" description="Proton donor; for dehydratase activity" evidence="6">
    <location>
        <position position="1117"/>
    </location>
</feature>
<feature type="modified residue" description="O-(pantetheine 4'-phosphoryl)serine" evidence="4">
    <location>
        <position position="2393"/>
    </location>
</feature>
<feature type="modified residue" description="O-(pantetheine 4'-phosphoryl)serine" evidence="4">
    <location>
        <position position="3602"/>
    </location>
</feature>
<name>PHMA_PHANO</name>
<gene>
    <name evidence="9" type="primary">phmA</name>
    <name type="ORF">SNOG_00308</name>
</gene>